<dbReference type="EMBL" id="AE016827">
    <property type="protein sequence ID" value="AAU36639.1"/>
    <property type="molecule type" value="Genomic_DNA"/>
</dbReference>
<dbReference type="STRING" id="221988.MS0032"/>
<dbReference type="KEGG" id="msu:MS0032"/>
<dbReference type="eggNOG" id="COG1295">
    <property type="taxonomic scope" value="Bacteria"/>
</dbReference>
<dbReference type="HOGENOM" id="CLU_032288_0_0_6"/>
<dbReference type="Proteomes" id="UP000000607">
    <property type="component" value="Chromosome"/>
</dbReference>
<dbReference type="GO" id="GO:0005886">
    <property type="term" value="C:plasma membrane"/>
    <property type="evidence" value="ECO:0007669"/>
    <property type="project" value="UniProtKB-SubCell"/>
</dbReference>
<dbReference type="HAMAP" id="MF_00672">
    <property type="entry name" value="UPF0761"/>
    <property type="match status" value="1"/>
</dbReference>
<dbReference type="InterPro" id="IPR023679">
    <property type="entry name" value="UPF0761_bac"/>
</dbReference>
<dbReference type="InterPro" id="IPR017039">
    <property type="entry name" value="Virul_fac_BrkB"/>
</dbReference>
<dbReference type="NCBIfam" id="NF002457">
    <property type="entry name" value="PRK01637.1"/>
    <property type="match status" value="1"/>
</dbReference>
<dbReference type="NCBIfam" id="TIGR00765">
    <property type="entry name" value="yihY_not_rbn"/>
    <property type="match status" value="1"/>
</dbReference>
<dbReference type="PANTHER" id="PTHR30213">
    <property type="entry name" value="INNER MEMBRANE PROTEIN YHJD"/>
    <property type="match status" value="1"/>
</dbReference>
<dbReference type="PANTHER" id="PTHR30213:SF0">
    <property type="entry name" value="UPF0761 MEMBRANE PROTEIN YIHY"/>
    <property type="match status" value="1"/>
</dbReference>
<dbReference type="Pfam" id="PF03631">
    <property type="entry name" value="Virul_fac_BrkB"/>
    <property type="match status" value="1"/>
</dbReference>
<dbReference type="PIRSF" id="PIRSF035875">
    <property type="entry name" value="RNase_BN"/>
    <property type="match status" value="1"/>
</dbReference>
<organism>
    <name type="scientific">Mannheimia succiniciproducens (strain KCTC 0769BP / MBEL55E)</name>
    <dbReference type="NCBI Taxonomy" id="221988"/>
    <lineage>
        <taxon>Bacteria</taxon>
        <taxon>Pseudomonadati</taxon>
        <taxon>Pseudomonadota</taxon>
        <taxon>Gammaproteobacteria</taxon>
        <taxon>Pasteurellales</taxon>
        <taxon>Pasteurellaceae</taxon>
        <taxon>Basfia</taxon>
    </lineage>
</organism>
<name>Y032_MANSM</name>
<sequence>MRRVVMTQLKLLFAVFYCRFQQNKLTQAAGALTYSTMLAIVPLVMVVFAIFSAFPMFNEAAAELKTFIFDNFSPSAGDTVGQYIDEFVVNSKSMSAVGIISLIAVALLLINQIDRTINDIWNSKNRNFIFSMTIYWTLLTLGPIFIGMSFAINTYIRSIIAFEGDLGLPFGLKLLSFVPFLLTWLSFSLIYTLVPNTKVNFRYAAVGALVAAIFFTLGKKAFAWYMATFPSYQLIYGAMATLPITLLWIQLSWLFILLGAQLTAVLGDMRLIKSGDLNLTAIKEKTE</sequence>
<gene>
    <name type="ordered locus">MS0032</name>
</gene>
<evidence type="ECO:0000255" key="1">
    <source>
        <dbReference type="HAMAP-Rule" id="MF_00672"/>
    </source>
</evidence>
<comment type="subcellular location">
    <subcellularLocation>
        <location evidence="1">Cell inner membrane</location>
        <topology evidence="1">Multi-pass membrane protein</topology>
    </subcellularLocation>
</comment>
<comment type="similarity">
    <text evidence="1">Belongs to the UPF0761 family.</text>
</comment>
<feature type="chain" id="PRO_0000200987" description="UPF0761 membrane protein MS0032">
    <location>
        <begin position="1"/>
        <end position="287"/>
    </location>
</feature>
<feature type="transmembrane region" description="Helical" evidence="1">
    <location>
        <begin position="37"/>
        <end position="57"/>
    </location>
</feature>
<feature type="transmembrane region" description="Helical" evidence="1">
    <location>
        <begin position="93"/>
        <end position="113"/>
    </location>
</feature>
<feature type="transmembrane region" description="Helical" evidence="1">
    <location>
        <begin position="128"/>
        <end position="148"/>
    </location>
</feature>
<feature type="transmembrane region" description="Helical" evidence="1">
    <location>
        <begin position="174"/>
        <end position="194"/>
    </location>
</feature>
<feature type="transmembrane region" description="Helical" evidence="1">
    <location>
        <begin position="204"/>
        <end position="224"/>
    </location>
</feature>
<feature type="transmembrane region" description="Helical" evidence="1">
    <location>
        <begin position="238"/>
        <end position="258"/>
    </location>
</feature>
<keyword id="KW-0997">Cell inner membrane</keyword>
<keyword id="KW-1003">Cell membrane</keyword>
<keyword id="KW-0472">Membrane</keyword>
<keyword id="KW-0812">Transmembrane</keyword>
<keyword id="KW-1133">Transmembrane helix</keyword>
<reference key="1">
    <citation type="journal article" date="2004" name="Nat. Biotechnol.">
        <title>The genome sequence of the capnophilic rumen bacterium Mannheimia succiniciproducens.</title>
        <authorList>
            <person name="Hong S.H."/>
            <person name="Kim J.S."/>
            <person name="Lee S.Y."/>
            <person name="In Y.H."/>
            <person name="Choi S.S."/>
            <person name="Rih J.-K."/>
            <person name="Kim C.H."/>
            <person name="Jeong H."/>
            <person name="Hur C.G."/>
            <person name="Kim J.J."/>
        </authorList>
    </citation>
    <scope>NUCLEOTIDE SEQUENCE [LARGE SCALE GENOMIC DNA]</scope>
    <source>
        <strain>KCTC 0769BP / MBEL55E</strain>
    </source>
</reference>
<proteinExistence type="inferred from homology"/>
<protein>
    <recommendedName>
        <fullName evidence="1">UPF0761 membrane protein MS0032</fullName>
    </recommendedName>
</protein>
<accession>Q65WM1</accession>